<name>COX1_ATRSP</name>
<accession>P29644</accession>
<organism>
    <name type="scientific">Atractosteus spatula</name>
    <name type="common">Alligator gar</name>
    <name type="synonym">Lepisosteus spatula</name>
    <dbReference type="NCBI Taxonomy" id="7917"/>
    <lineage>
        <taxon>Eukaryota</taxon>
        <taxon>Metazoa</taxon>
        <taxon>Chordata</taxon>
        <taxon>Craniata</taxon>
        <taxon>Vertebrata</taxon>
        <taxon>Euteleostomi</taxon>
        <taxon>Actinopterygii</taxon>
        <taxon>Neopterygii</taxon>
        <taxon>Holostei</taxon>
        <taxon>Semionotiformes</taxon>
        <taxon>Lepisosteidae</taxon>
        <taxon>Atractosteus</taxon>
    </lineage>
</organism>
<protein>
    <recommendedName>
        <fullName>Cytochrome c oxidase subunit 1</fullName>
        <ecNumber>7.1.1.9</ecNumber>
    </recommendedName>
    <alternativeName>
        <fullName>Cytochrome c oxidase polypeptide I</fullName>
    </alternativeName>
</protein>
<comment type="function">
    <text evidence="3">Component of the cytochrome c oxidase, the last enzyme in the mitochondrial electron transport chain which drives oxidative phosphorylation. The respiratory chain contains 3 multisubunit complexes succinate dehydrogenase (complex II, CII), ubiquinol-cytochrome c oxidoreductase (cytochrome b-c1 complex, complex III, CIII) and cytochrome c oxidase (complex IV, CIV), that cooperate to transfer electrons derived from NADH and succinate to molecular oxygen, creating an electrochemical gradient over the inner membrane that drives transmembrane transport and the ATP synthase. Cytochrome c oxidase is the component of the respiratory chain that catalyzes the reduction of oxygen to water. Electrons originating from reduced cytochrome c in the intermembrane space (IMS) are transferred via the dinuclear copper A center (CU(A)) of subunit 2 and heme A of subunit 1 to the active site in subunit 1, a binuclear center (BNC) formed by heme A3 and copper B (CU(B)). The BNC reduces molecular oxygen to 2 water molecules using 4 electrons from cytochrome c in the IMS and 4 protons from the mitochondrial matrix.</text>
</comment>
<comment type="catalytic activity">
    <reaction evidence="3">
        <text>4 Fe(II)-[cytochrome c] + O2 + 8 H(+)(in) = 4 Fe(III)-[cytochrome c] + 2 H2O + 4 H(+)(out)</text>
        <dbReference type="Rhea" id="RHEA:11436"/>
        <dbReference type="Rhea" id="RHEA-COMP:10350"/>
        <dbReference type="Rhea" id="RHEA-COMP:14399"/>
        <dbReference type="ChEBI" id="CHEBI:15377"/>
        <dbReference type="ChEBI" id="CHEBI:15378"/>
        <dbReference type="ChEBI" id="CHEBI:15379"/>
        <dbReference type="ChEBI" id="CHEBI:29033"/>
        <dbReference type="ChEBI" id="CHEBI:29034"/>
        <dbReference type="EC" id="7.1.1.9"/>
    </reaction>
    <physiologicalReaction direction="left-to-right" evidence="3">
        <dbReference type="Rhea" id="RHEA:11437"/>
    </physiologicalReaction>
</comment>
<comment type="cofactor">
    <cofactor evidence="2">
        <name>heme</name>
        <dbReference type="ChEBI" id="CHEBI:30413"/>
    </cofactor>
    <text evidence="2">Binds 2 heme A groups non-covalently per subunit.</text>
</comment>
<comment type="cofactor">
    <cofactor evidence="2">
        <name>Cu cation</name>
        <dbReference type="ChEBI" id="CHEBI:23378"/>
    </cofactor>
    <text evidence="2">Binds a copper B center.</text>
</comment>
<comment type="pathway">
    <text evidence="3">Energy metabolism; oxidative phosphorylation.</text>
</comment>
<comment type="subunit">
    <text evidence="1 2">Component of the cytochrome c oxidase (complex IV, CIV), a multisubunit enzyme composed of 14 subunits. The complex is composed of a catalytic core of 3 subunits MT-CO1, MT-CO2 and MT-CO3, encoded in the mitochondrial DNA, and 11 supernumerary subunits COX4I, COX5A, COX5B, COX6A, COX6B, COX6C, COX7A, COX7B, COX7C, COX8 and NDUFA4, which are encoded in the nuclear genome. The complex exists as a monomer or a dimer and forms supercomplexes (SCs) in the inner mitochondrial membrane with NADH-ubiquinone oxidoreductase (complex I, CI) and ubiquinol-cytochrome c oxidoreductase (cytochrome b-c1 complex, complex III, CIII), resulting in different assemblies (supercomplex SCI(1)III(2)IV(1) and megacomplex MCI(2)III(2)IV(2)) (By similarity). As a newly synthesized protein, rapidly incorporates into a multi-subunit assembly intermediate in the inner membrane, called MITRAC (mitochondrial translation regulation assembly intermediate of cytochrome c oxidase) complex, whose core components are COA3/MITRAC12 and COX14. Within the MITRAC complex, interacts with COA3 and with SMIM20/MITRAC7; the interaction with SMIM20 stabilizes the newly synthesized MT-CO1 and prevents its premature turnover. Interacts with TMEM177 in a COX20-dependent manner (By similarity).</text>
</comment>
<comment type="subcellular location">
    <subcellularLocation>
        <location evidence="2">Mitochondrion inner membrane</location>
        <topology evidence="2">Multi-pass membrane protein</topology>
    </subcellularLocation>
</comment>
<comment type="similarity">
    <text evidence="4">Belongs to the heme-copper respiratory oxidase family.</text>
</comment>
<feature type="chain" id="PRO_0000183353" description="Cytochrome c oxidase subunit 1">
    <location>
        <begin position="1" status="less than"/>
        <end position="157" status="greater than"/>
    </location>
</feature>
<feature type="transmembrane region" description="Helical; Name=VI" evidence="2">
    <location>
        <begin position="1" status="less than"/>
        <end position="29"/>
    </location>
</feature>
<feature type="topological domain" description="Mitochondrial matrix" evidence="2">
    <location>
        <begin position="30"/>
        <end position="37"/>
    </location>
</feature>
<feature type="transmembrane region" description="Helical; Name=VII" evidence="2">
    <location>
        <begin position="38"/>
        <end position="54"/>
    </location>
</feature>
<feature type="topological domain" description="Mitochondrial intermembrane" evidence="2">
    <location>
        <begin position="55"/>
        <end position="66"/>
    </location>
</feature>
<feature type="transmembrane region" description="Helical; Name=VIII" evidence="2">
    <location>
        <begin position="67"/>
        <end position="95"/>
    </location>
</feature>
<feature type="topological domain" description="Mitochondrial matrix" evidence="2">
    <location>
        <begin position="96"/>
        <end position="103"/>
    </location>
</feature>
<feature type="transmembrane region" description="Helical; Name=IX" evidence="2">
    <location>
        <begin position="104"/>
        <end position="125"/>
    </location>
</feature>
<feature type="topological domain" description="Mitochondrial intermembrane" evidence="2">
    <location>
        <begin position="126"/>
        <end position="138"/>
    </location>
</feature>
<feature type="transmembrane region" description="Helical; Name=X" evidence="2">
    <location>
        <begin position="139"/>
        <end position="157" status="greater than"/>
    </location>
</feature>
<feature type="binding site" evidence="2">
    <location>
        <position position="8"/>
    </location>
    <ligand>
        <name>Cu cation</name>
        <dbReference type="ChEBI" id="CHEBI:23378"/>
        <label>B</label>
    </ligand>
</feature>
<feature type="binding site" evidence="2">
    <location>
        <position position="12"/>
    </location>
    <ligand>
        <name>O2</name>
        <dbReference type="ChEBI" id="CHEBI:15379"/>
    </ligand>
</feature>
<feature type="binding site" evidence="2">
    <location>
        <position position="58"/>
    </location>
    <ligand>
        <name>Cu cation</name>
        <dbReference type="ChEBI" id="CHEBI:23378"/>
        <label>B</label>
    </ligand>
</feature>
<feature type="binding site" evidence="2">
    <location>
        <position position="59"/>
    </location>
    <ligand>
        <name>Cu cation</name>
        <dbReference type="ChEBI" id="CHEBI:23378"/>
        <label>B</label>
    </ligand>
</feature>
<feature type="binding site" evidence="2">
    <location>
        <position position="136"/>
    </location>
    <ligand>
        <name>Mg(2+)</name>
        <dbReference type="ChEBI" id="CHEBI:18420"/>
        <note>ligand shared with MT-CO2</note>
    </ligand>
</feature>
<feature type="binding site" evidence="2">
    <location>
        <position position="137"/>
    </location>
    <ligand>
        <name>Mg(2+)</name>
        <dbReference type="ChEBI" id="CHEBI:18420"/>
        <note>ligand shared with MT-CO2</note>
    </ligand>
</feature>
<feature type="binding site" description="axial binding residue" evidence="2">
    <location>
        <position position="144"/>
    </location>
    <ligand>
        <name>heme a3</name>
        <dbReference type="ChEBI" id="CHEBI:83282"/>
        <note>high-spin</note>
    </ligand>
    <ligandPart>
        <name>Fe</name>
        <dbReference type="ChEBI" id="CHEBI:18248"/>
    </ligandPart>
</feature>
<feature type="binding site" description="axial binding residue" evidence="2">
    <location>
        <position position="146"/>
    </location>
    <ligand>
        <name>Fe(II)-heme a</name>
        <dbReference type="ChEBI" id="CHEBI:61715"/>
        <note>low-spin</note>
    </ligand>
    <ligandPart>
        <name>Fe</name>
        <dbReference type="ChEBI" id="CHEBI:18248"/>
    </ligandPart>
</feature>
<feature type="cross-link" description="1'-histidyl-3'-tyrosine (His-Tyr)" evidence="2">
    <location>
        <begin position="8"/>
        <end position="12"/>
    </location>
</feature>
<feature type="non-terminal residue">
    <location>
        <position position="1"/>
    </location>
</feature>
<feature type="non-terminal residue">
    <location>
        <position position="157"/>
    </location>
</feature>
<evidence type="ECO:0000250" key="1">
    <source>
        <dbReference type="UniProtKB" id="P00395"/>
    </source>
</evidence>
<evidence type="ECO:0000250" key="2">
    <source>
        <dbReference type="UniProtKB" id="P00396"/>
    </source>
</evidence>
<evidence type="ECO:0000250" key="3">
    <source>
        <dbReference type="UniProtKB" id="P00401"/>
    </source>
</evidence>
<evidence type="ECO:0000305" key="4"/>
<gene>
    <name type="primary">mt-co1</name>
    <name type="synonym">coi</name>
    <name type="synonym">coxi</name>
    <name type="synonym">mtco1</name>
</gene>
<dbReference type="EC" id="7.1.1.9"/>
<dbReference type="EMBL" id="M64888">
    <property type="protein sequence ID" value="AAB01443.1"/>
    <property type="molecule type" value="Genomic_DNA"/>
</dbReference>
<dbReference type="SMR" id="P29644"/>
<dbReference type="UniPathway" id="UPA00705"/>
<dbReference type="GO" id="GO:0005743">
    <property type="term" value="C:mitochondrial inner membrane"/>
    <property type="evidence" value="ECO:0007669"/>
    <property type="project" value="UniProtKB-SubCell"/>
</dbReference>
<dbReference type="GO" id="GO:0045277">
    <property type="term" value="C:respiratory chain complex IV"/>
    <property type="evidence" value="ECO:0000250"/>
    <property type="project" value="UniProtKB"/>
</dbReference>
<dbReference type="GO" id="GO:0004129">
    <property type="term" value="F:cytochrome-c oxidase activity"/>
    <property type="evidence" value="ECO:0007669"/>
    <property type="project" value="UniProtKB-EC"/>
</dbReference>
<dbReference type="GO" id="GO:0020037">
    <property type="term" value="F:heme binding"/>
    <property type="evidence" value="ECO:0007669"/>
    <property type="project" value="InterPro"/>
</dbReference>
<dbReference type="GO" id="GO:0046872">
    <property type="term" value="F:metal ion binding"/>
    <property type="evidence" value="ECO:0007669"/>
    <property type="project" value="UniProtKB-KW"/>
</dbReference>
<dbReference type="GO" id="GO:0015990">
    <property type="term" value="P:electron transport coupled proton transport"/>
    <property type="evidence" value="ECO:0007669"/>
    <property type="project" value="TreeGrafter"/>
</dbReference>
<dbReference type="GO" id="GO:0006123">
    <property type="term" value="P:mitochondrial electron transport, cytochrome c to oxygen"/>
    <property type="evidence" value="ECO:0007669"/>
    <property type="project" value="TreeGrafter"/>
</dbReference>
<dbReference type="FunFam" id="1.20.210.10:FF:000009">
    <property type="entry name" value="Cytochrome c oxidase subunit 1"/>
    <property type="match status" value="1"/>
</dbReference>
<dbReference type="Gene3D" id="1.20.210.10">
    <property type="entry name" value="Cytochrome c oxidase-like, subunit I domain"/>
    <property type="match status" value="1"/>
</dbReference>
<dbReference type="InterPro" id="IPR023616">
    <property type="entry name" value="Cyt_c_oxase-like_su1_dom"/>
</dbReference>
<dbReference type="InterPro" id="IPR036927">
    <property type="entry name" value="Cyt_c_oxase-like_su1_sf"/>
</dbReference>
<dbReference type="InterPro" id="IPR000883">
    <property type="entry name" value="Cyt_C_Oxase_1"/>
</dbReference>
<dbReference type="InterPro" id="IPR023615">
    <property type="entry name" value="Cyt_c_Oxase_su1_BS"/>
</dbReference>
<dbReference type="PANTHER" id="PTHR10422">
    <property type="entry name" value="CYTOCHROME C OXIDASE SUBUNIT 1"/>
    <property type="match status" value="1"/>
</dbReference>
<dbReference type="PANTHER" id="PTHR10422:SF18">
    <property type="entry name" value="CYTOCHROME C OXIDASE SUBUNIT 1"/>
    <property type="match status" value="1"/>
</dbReference>
<dbReference type="Pfam" id="PF00115">
    <property type="entry name" value="COX1"/>
    <property type="match status" value="1"/>
</dbReference>
<dbReference type="PRINTS" id="PR01165">
    <property type="entry name" value="CYCOXIDASEI"/>
</dbReference>
<dbReference type="SUPFAM" id="SSF81442">
    <property type="entry name" value="Cytochrome c oxidase subunit I-like"/>
    <property type="match status" value="1"/>
</dbReference>
<dbReference type="PROSITE" id="PS50855">
    <property type="entry name" value="COX1"/>
    <property type="match status" value="1"/>
</dbReference>
<dbReference type="PROSITE" id="PS00077">
    <property type="entry name" value="COX1_CUB"/>
    <property type="match status" value="1"/>
</dbReference>
<proteinExistence type="inferred from homology"/>
<reference key="1">
    <citation type="journal article" date="1991" name="Mol. Biol. Evol.">
        <title>Phylogenetic relationships of neopterygian fishes, inferred from mitochondrial DNA sequences.</title>
        <authorList>
            <person name="Normark B.B."/>
            <person name="McCune A.R."/>
            <person name="Harrison R.G."/>
        </authorList>
    </citation>
    <scope>NUCLEOTIDE SEQUENCE [GENOMIC DNA]</scope>
</reference>
<sequence>HLFWFFGHPEVYILILPGFGMISHIVAYYAGKKEPFGYMGMVWAMMAIGLLGFIVWAHHMFTVGMDVDTRAYFTSATMIIAIPTGVKVFSWLATLHGGSIKWDTPLLWALGFIFLFTVGGLTGIVLANSSLDIMLHDTYYVVAHFHYVLSMGAVFAI</sequence>
<geneLocation type="mitochondrion"/>
<keyword id="KW-0186">Copper</keyword>
<keyword id="KW-0249">Electron transport</keyword>
<keyword id="KW-0349">Heme</keyword>
<keyword id="KW-0408">Iron</keyword>
<keyword id="KW-0460">Magnesium</keyword>
<keyword id="KW-0472">Membrane</keyword>
<keyword id="KW-0479">Metal-binding</keyword>
<keyword id="KW-0496">Mitochondrion</keyword>
<keyword id="KW-0999">Mitochondrion inner membrane</keyword>
<keyword id="KW-0679">Respiratory chain</keyword>
<keyword id="KW-0915">Sodium</keyword>
<keyword id="KW-1278">Translocase</keyword>
<keyword id="KW-0812">Transmembrane</keyword>
<keyword id="KW-1133">Transmembrane helix</keyword>
<keyword id="KW-0813">Transport</keyword>